<accession>Q9Y6J9</accession>
<accession>B2RAT0</accession>
<accession>Q96HA6</accession>
<name>TAF6L_HUMAN</name>
<comment type="function">
    <text evidence="1 7">Functions as a component of the PCAF complex. The PCAF complex is capable of efficiently acetylating histones in a nucleosomal context. The PCAF complex could be considered as the human version of the yeast SAGA complex (Probable). With TAF5L, acts as an epigenetic regulator essential for somatic reprogramming. Regulates target genes through H3K9ac deposition and MYC recruitment which trigger MYC regulatory network to orchestrate gene expression programs to control embryonic stem cell state. Functions with MYC to activate target gene expression through RNA polymerase II pause release (By similarity).</text>
</comment>
<comment type="subunit">
    <text evidence="3 4 5">The PCAF complex is composed of a number of TBP-associated factors (TAFS), such as TAF5, TAF5L, TAF6, TAF6L, TAF9, TAF10 and TAF12, PCAF, and also PCAF-associated factors (PAFs), such as TADA2L/ADA2, TADA3L/ADA3 and SPT3. Component of the STAGA transcription coactivator-HAT complex, at least composed of SUPT3H, GCN5L2, TAF5L, TAF6L, SUPT7L, TADA3L, TAD1L, TAF10, TAF12, TRRAP and TAF9.</text>
</comment>
<comment type="interaction">
    <interactant intactId="EBI-743984">
        <id>Q9Y6J9</id>
    </interactant>
    <interactant intactId="EBI-357275">
        <id>Q99471</id>
        <label>PFDN5</label>
    </interactant>
    <organismsDiffer>false</organismsDiffer>
    <experiments>3</experiments>
</comment>
<comment type="interaction">
    <interactant intactId="EBI-743984">
        <id>Q9Y6J9</id>
    </interactant>
    <interactant intactId="EBI-712521">
        <id>Q16594</id>
        <label>TAF9</label>
    </interactant>
    <organismsDiffer>false</organismsDiffer>
    <experiments>11</experiments>
</comment>
<comment type="interaction">
    <interactant intactId="EBI-743984">
        <id>Q9Y6J9</id>
    </interactant>
    <interactant intactId="EBI-751601">
        <id>Q9HBM6</id>
        <label>TAF9B</label>
    </interactant>
    <organismsDiffer>false</organismsDiffer>
    <experiments>12</experiments>
</comment>
<comment type="subcellular location">
    <subcellularLocation>
        <location evidence="3 5">Nucleus</location>
    </subcellularLocation>
</comment>
<comment type="similarity">
    <text evidence="6">Belongs to the TAF6 family.</text>
</comment>
<proteinExistence type="evidence at protein level"/>
<feature type="chain" id="PRO_0000118879" description="TAF6-like RNA polymerase II p300/CBP-associated factor-associated factor 65 kDa subunit 6L">
    <location>
        <begin position="1"/>
        <end position="622"/>
    </location>
</feature>
<feature type="region of interest" description="Disordered" evidence="2">
    <location>
        <begin position="403"/>
        <end position="430"/>
    </location>
</feature>
<feature type="region of interest" description="Disordered" evidence="2">
    <location>
        <begin position="457"/>
        <end position="546"/>
    </location>
</feature>
<feature type="compositionally biased region" description="Low complexity" evidence="2">
    <location>
        <begin position="511"/>
        <end position="522"/>
    </location>
</feature>
<feature type="modified residue" description="Phosphoserine" evidence="9">
    <location>
        <position position="495"/>
    </location>
</feature>
<feature type="modified residue" description="Phosphoserine" evidence="9">
    <location>
        <position position="501"/>
    </location>
</feature>
<feature type="modified residue" description="Asymmetric dimethylarginine" evidence="10">
    <location>
        <position position="555"/>
    </location>
</feature>
<feature type="modified residue" description="Asymmetric dimethylarginine" evidence="10">
    <location>
        <position position="561"/>
    </location>
</feature>
<feature type="modified residue" description="Asymmetric dimethylarginine" evidence="10">
    <location>
        <position position="593"/>
    </location>
</feature>
<feature type="helix" evidence="11">
    <location>
        <begin position="14"/>
        <end position="24"/>
    </location>
</feature>
<feature type="helix" evidence="11">
    <location>
        <begin position="30"/>
        <end position="56"/>
    </location>
</feature>
<feature type="turn" evidence="11">
    <location>
        <begin position="57"/>
        <end position="59"/>
    </location>
</feature>
<feature type="helix" evidence="11">
    <location>
        <begin position="65"/>
        <end position="74"/>
    </location>
</feature>
<feature type="strand" evidence="11">
    <location>
        <begin position="85"/>
        <end position="87"/>
    </location>
</feature>
<feature type="strand" evidence="11">
    <location>
        <begin position="91"/>
        <end position="93"/>
    </location>
</feature>
<feature type="strand" evidence="11">
    <location>
        <begin position="95"/>
        <end position="98"/>
    </location>
</feature>
<feature type="strand" evidence="11">
    <location>
        <begin position="100"/>
        <end position="102"/>
    </location>
</feature>
<feature type="strand" evidence="11">
    <location>
        <begin position="106"/>
        <end position="108"/>
    </location>
</feature>
<feature type="helix" evidence="11">
    <location>
        <begin position="109"/>
        <end position="113"/>
    </location>
</feature>
<feature type="strand" evidence="11">
    <location>
        <begin position="127"/>
        <end position="133"/>
    </location>
</feature>
<organism>
    <name type="scientific">Homo sapiens</name>
    <name type="common">Human</name>
    <dbReference type="NCBI Taxonomy" id="9606"/>
    <lineage>
        <taxon>Eukaryota</taxon>
        <taxon>Metazoa</taxon>
        <taxon>Chordata</taxon>
        <taxon>Craniata</taxon>
        <taxon>Vertebrata</taxon>
        <taxon>Euteleostomi</taxon>
        <taxon>Mammalia</taxon>
        <taxon>Eutheria</taxon>
        <taxon>Euarchontoglires</taxon>
        <taxon>Primates</taxon>
        <taxon>Haplorrhini</taxon>
        <taxon>Catarrhini</taxon>
        <taxon>Hominidae</taxon>
        <taxon>Homo</taxon>
    </lineage>
</organism>
<gene>
    <name evidence="8" type="primary">TAF6L</name>
    <name type="synonym">PAF65A</name>
</gene>
<reference key="1">
    <citation type="journal article" date="1998" name="Cell">
        <title>Histone-like TAFs within the PCAF histone acetylase complex.</title>
        <authorList>
            <person name="Ogryzko V.V."/>
            <person name="Kotani T."/>
            <person name="Zhang X."/>
            <person name="Schiltz R.L."/>
            <person name="Howard T."/>
            <person name="Yang X.-J."/>
            <person name="Howard B.H."/>
            <person name="Qin J."/>
            <person name="Nakatani Y."/>
        </authorList>
    </citation>
    <scope>NUCLEOTIDE SEQUENCE [MRNA]</scope>
    <scope>PROTEIN SEQUENCE OF 8-14; 62-70; 205-221 AND 577-593</scope>
    <scope>SUBUNIT</scope>
    <scope>SUBCELLULAR LOCATION</scope>
    <scope>IDENTIFICATION BY MASS SPECTROMETRY</scope>
</reference>
<reference key="2">
    <citation type="journal article" date="2004" name="Nat. Genet.">
        <title>Complete sequencing and characterization of 21,243 full-length human cDNAs.</title>
        <authorList>
            <person name="Ota T."/>
            <person name="Suzuki Y."/>
            <person name="Nishikawa T."/>
            <person name="Otsuki T."/>
            <person name="Sugiyama T."/>
            <person name="Irie R."/>
            <person name="Wakamatsu A."/>
            <person name="Hayashi K."/>
            <person name="Sato H."/>
            <person name="Nagai K."/>
            <person name="Kimura K."/>
            <person name="Makita H."/>
            <person name="Sekine M."/>
            <person name="Obayashi M."/>
            <person name="Nishi T."/>
            <person name="Shibahara T."/>
            <person name="Tanaka T."/>
            <person name="Ishii S."/>
            <person name="Yamamoto J."/>
            <person name="Saito K."/>
            <person name="Kawai Y."/>
            <person name="Isono Y."/>
            <person name="Nakamura Y."/>
            <person name="Nagahari K."/>
            <person name="Murakami K."/>
            <person name="Yasuda T."/>
            <person name="Iwayanagi T."/>
            <person name="Wagatsuma M."/>
            <person name="Shiratori A."/>
            <person name="Sudo H."/>
            <person name="Hosoiri T."/>
            <person name="Kaku Y."/>
            <person name="Kodaira H."/>
            <person name="Kondo H."/>
            <person name="Sugawara M."/>
            <person name="Takahashi M."/>
            <person name="Kanda K."/>
            <person name="Yokoi T."/>
            <person name="Furuya T."/>
            <person name="Kikkawa E."/>
            <person name="Omura Y."/>
            <person name="Abe K."/>
            <person name="Kamihara K."/>
            <person name="Katsuta N."/>
            <person name="Sato K."/>
            <person name="Tanikawa M."/>
            <person name="Yamazaki M."/>
            <person name="Ninomiya K."/>
            <person name="Ishibashi T."/>
            <person name="Yamashita H."/>
            <person name="Murakawa K."/>
            <person name="Fujimori K."/>
            <person name="Tanai H."/>
            <person name="Kimata M."/>
            <person name="Watanabe M."/>
            <person name="Hiraoka S."/>
            <person name="Chiba Y."/>
            <person name="Ishida S."/>
            <person name="Ono Y."/>
            <person name="Takiguchi S."/>
            <person name="Watanabe S."/>
            <person name="Yosida M."/>
            <person name="Hotuta T."/>
            <person name="Kusano J."/>
            <person name="Kanehori K."/>
            <person name="Takahashi-Fujii A."/>
            <person name="Hara H."/>
            <person name="Tanase T.-O."/>
            <person name="Nomura Y."/>
            <person name="Togiya S."/>
            <person name="Komai F."/>
            <person name="Hara R."/>
            <person name="Takeuchi K."/>
            <person name="Arita M."/>
            <person name="Imose N."/>
            <person name="Musashino K."/>
            <person name="Yuuki H."/>
            <person name="Oshima A."/>
            <person name="Sasaki N."/>
            <person name="Aotsuka S."/>
            <person name="Yoshikawa Y."/>
            <person name="Matsunawa H."/>
            <person name="Ichihara T."/>
            <person name="Shiohata N."/>
            <person name="Sano S."/>
            <person name="Moriya S."/>
            <person name="Momiyama H."/>
            <person name="Satoh N."/>
            <person name="Takami S."/>
            <person name="Terashima Y."/>
            <person name="Suzuki O."/>
            <person name="Nakagawa S."/>
            <person name="Senoh A."/>
            <person name="Mizoguchi H."/>
            <person name="Goto Y."/>
            <person name="Shimizu F."/>
            <person name="Wakebe H."/>
            <person name="Hishigaki H."/>
            <person name="Watanabe T."/>
            <person name="Sugiyama A."/>
            <person name="Takemoto M."/>
            <person name="Kawakami B."/>
            <person name="Yamazaki M."/>
            <person name="Watanabe K."/>
            <person name="Kumagai A."/>
            <person name="Itakura S."/>
            <person name="Fukuzumi Y."/>
            <person name="Fujimori Y."/>
            <person name="Komiyama M."/>
            <person name="Tashiro H."/>
            <person name="Tanigami A."/>
            <person name="Fujiwara T."/>
            <person name="Ono T."/>
            <person name="Yamada K."/>
            <person name="Fujii Y."/>
            <person name="Ozaki K."/>
            <person name="Hirao M."/>
            <person name="Ohmori Y."/>
            <person name="Kawabata A."/>
            <person name="Hikiji T."/>
            <person name="Kobatake N."/>
            <person name="Inagaki H."/>
            <person name="Ikema Y."/>
            <person name="Okamoto S."/>
            <person name="Okitani R."/>
            <person name="Kawakami T."/>
            <person name="Noguchi S."/>
            <person name="Itoh T."/>
            <person name="Shigeta K."/>
            <person name="Senba T."/>
            <person name="Matsumura K."/>
            <person name="Nakajima Y."/>
            <person name="Mizuno T."/>
            <person name="Morinaga M."/>
            <person name="Sasaki M."/>
            <person name="Togashi T."/>
            <person name="Oyama M."/>
            <person name="Hata H."/>
            <person name="Watanabe M."/>
            <person name="Komatsu T."/>
            <person name="Mizushima-Sugano J."/>
            <person name="Satoh T."/>
            <person name="Shirai Y."/>
            <person name="Takahashi Y."/>
            <person name="Nakagawa K."/>
            <person name="Okumura K."/>
            <person name="Nagase T."/>
            <person name="Nomura N."/>
            <person name="Kikuchi H."/>
            <person name="Masuho Y."/>
            <person name="Yamashita R."/>
            <person name="Nakai K."/>
            <person name="Yada T."/>
            <person name="Nakamura Y."/>
            <person name="Ohara O."/>
            <person name="Isogai T."/>
            <person name="Sugano S."/>
        </authorList>
    </citation>
    <scope>NUCLEOTIDE SEQUENCE [LARGE SCALE MRNA]</scope>
    <source>
        <tissue>Testis</tissue>
    </source>
</reference>
<reference key="3">
    <citation type="submission" date="2005-07" db="EMBL/GenBank/DDBJ databases">
        <authorList>
            <person name="Mural R.J."/>
            <person name="Istrail S."/>
            <person name="Sutton G.G."/>
            <person name="Florea L."/>
            <person name="Halpern A.L."/>
            <person name="Mobarry C.M."/>
            <person name="Lippert R."/>
            <person name="Walenz B."/>
            <person name="Shatkay H."/>
            <person name="Dew I."/>
            <person name="Miller J.R."/>
            <person name="Flanigan M.J."/>
            <person name="Edwards N.J."/>
            <person name="Bolanos R."/>
            <person name="Fasulo D."/>
            <person name="Halldorsson B.V."/>
            <person name="Hannenhalli S."/>
            <person name="Turner R."/>
            <person name="Yooseph S."/>
            <person name="Lu F."/>
            <person name="Nusskern D.R."/>
            <person name="Shue B.C."/>
            <person name="Zheng X.H."/>
            <person name="Zhong F."/>
            <person name="Delcher A.L."/>
            <person name="Huson D.H."/>
            <person name="Kravitz S.A."/>
            <person name="Mouchard L."/>
            <person name="Reinert K."/>
            <person name="Remington K.A."/>
            <person name="Clark A.G."/>
            <person name="Waterman M.S."/>
            <person name="Eichler E.E."/>
            <person name="Adams M.D."/>
            <person name="Hunkapiller M.W."/>
            <person name="Myers E.W."/>
            <person name="Venter J.C."/>
        </authorList>
    </citation>
    <scope>NUCLEOTIDE SEQUENCE [LARGE SCALE GENOMIC DNA]</scope>
</reference>
<reference key="4">
    <citation type="journal article" date="1998" name="Cell">
        <title>The TAFs in the HAT.</title>
        <authorList>
            <person name="Struhl K."/>
            <person name="Moqtaderi Z."/>
        </authorList>
    </citation>
    <scope>REVIEW</scope>
    <scope>PCAF COMPLEX COMPOSITION</scope>
</reference>
<reference key="5">
    <citation type="journal article" date="2001" name="Mol. Cell. Biol.">
        <title>Human STAGA complex is a chromatin-acetylating transcription coactivator that interacts with pre-mRNA splicing and DNA damage-binding factors in vivo.</title>
        <authorList>
            <person name="Martinez E."/>
            <person name="Palhan V.B."/>
            <person name="Tjernberg A."/>
            <person name="Lymar E.S."/>
            <person name="Gamper A.M."/>
            <person name="Kundu T.K."/>
            <person name="Chait B.T."/>
            <person name="Roeder R.G."/>
        </authorList>
    </citation>
    <scope>IDENTIFICATION IN THE STAGA COMPLEX</scope>
    <scope>SUBCELLULAR LOCATION</scope>
    <scope>IDENTIFICATION BY MASS SPECTROMETRY</scope>
</reference>
<reference key="6">
    <citation type="journal article" date="2003" name="Proteomics">
        <title>Novel subunits of the TATA binding protein free TAFII-containing transcription complex identified by matrix-assisted laser desorption/ionization-time of flight mass spectrometry following one-dimensional gel electrophoresis.</title>
        <authorList>
            <person name="Cavusoglu N."/>
            <person name="Brand M."/>
            <person name="Tora L."/>
            <person name="van Dorsselaer A."/>
        </authorList>
    </citation>
    <scope>IDENTIFICATION IN THE TFTC-HAT COMPLEX</scope>
    <scope>IDENTIFICATION BY MASS SPECTROMETRY</scope>
</reference>
<reference key="7">
    <citation type="journal article" date="2013" name="J. Proteome Res.">
        <title>Toward a comprehensive characterization of a human cancer cell phosphoproteome.</title>
        <authorList>
            <person name="Zhou H."/>
            <person name="Di Palma S."/>
            <person name="Preisinger C."/>
            <person name="Peng M."/>
            <person name="Polat A.N."/>
            <person name="Heck A.J."/>
            <person name="Mohammed S."/>
        </authorList>
    </citation>
    <scope>PHOSPHORYLATION [LARGE SCALE ANALYSIS] AT SER-495 AND SER-501</scope>
    <scope>IDENTIFICATION BY MASS SPECTROMETRY [LARGE SCALE ANALYSIS]</scope>
    <source>
        <tissue>Erythroleukemia</tissue>
    </source>
</reference>
<reference key="8">
    <citation type="journal article" date="2014" name="Mol. Cell. Proteomics">
        <title>Immunoaffinity enrichment and mass spectrometry analysis of protein methylation.</title>
        <authorList>
            <person name="Guo A."/>
            <person name="Gu H."/>
            <person name="Zhou J."/>
            <person name="Mulhern D."/>
            <person name="Wang Y."/>
            <person name="Lee K.A."/>
            <person name="Yang V."/>
            <person name="Aguiar M."/>
            <person name="Kornhauser J."/>
            <person name="Jia X."/>
            <person name="Ren J."/>
            <person name="Beausoleil S.A."/>
            <person name="Silva J.C."/>
            <person name="Vemulapalli V."/>
            <person name="Bedford M.T."/>
            <person name="Comb M.J."/>
        </authorList>
    </citation>
    <scope>METHYLATION [LARGE SCALE ANALYSIS] AT ARG-555; ARG-561 AND ARG-593</scope>
    <scope>IDENTIFICATION BY MASS SPECTROMETRY [LARGE SCALE ANALYSIS]</scope>
    <source>
        <tissue>Colon carcinoma</tissue>
    </source>
</reference>
<keyword id="KW-0002">3D-structure</keyword>
<keyword id="KW-0903">Direct protein sequencing</keyword>
<keyword id="KW-0488">Methylation</keyword>
<keyword id="KW-0539">Nucleus</keyword>
<keyword id="KW-0597">Phosphoprotein</keyword>
<keyword id="KW-1267">Proteomics identification</keyword>
<keyword id="KW-1185">Reference proteome</keyword>
<keyword id="KW-0804">Transcription</keyword>
<keyword id="KW-0805">Transcription regulation</keyword>
<dbReference type="EMBL" id="AF069735">
    <property type="protein sequence ID" value="AAC39905.1"/>
    <property type="molecule type" value="mRNA"/>
</dbReference>
<dbReference type="EMBL" id="AK314330">
    <property type="protein sequence ID" value="BAG36977.1"/>
    <property type="molecule type" value="mRNA"/>
</dbReference>
<dbReference type="EMBL" id="CH471076">
    <property type="protein sequence ID" value="EAW74093.1"/>
    <property type="molecule type" value="Genomic_DNA"/>
</dbReference>
<dbReference type="CCDS" id="CCDS8035.1"/>
<dbReference type="RefSeq" id="NP_006464.1">
    <property type="nucleotide sequence ID" value="NM_006473.4"/>
</dbReference>
<dbReference type="PDB" id="7KTR">
    <property type="method" value="EM"/>
    <property type="resolution" value="2.93 A"/>
    <property type="chains" value="F=1-622"/>
</dbReference>
<dbReference type="PDB" id="7KTS">
    <property type="method" value="EM"/>
    <property type="resolution" value="19.09 A"/>
    <property type="chains" value="F=1-622"/>
</dbReference>
<dbReference type="PDB" id="8H7G">
    <property type="method" value="EM"/>
    <property type="resolution" value="3.70 A"/>
    <property type="chains" value="K=1-622"/>
</dbReference>
<dbReference type="PDBsum" id="7KTR"/>
<dbReference type="PDBsum" id="7KTS"/>
<dbReference type="PDBsum" id="8H7G"/>
<dbReference type="EMDB" id="EMD-23027"/>
<dbReference type="EMDB" id="EMD-23028"/>
<dbReference type="EMDB" id="EMD-34520"/>
<dbReference type="SMR" id="Q9Y6J9"/>
<dbReference type="BioGRID" id="115873">
    <property type="interactions" value="122"/>
</dbReference>
<dbReference type="ComplexPortal" id="CPX-6802">
    <property type="entry name" value="SAGA complex, KAT2B variant"/>
</dbReference>
<dbReference type="ComplexPortal" id="CPX-900">
    <property type="entry name" value="SAGA complex, KAT2A variant"/>
</dbReference>
<dbReference type="ComplexPortal" id="CPX-989">
    <property type="entry name" value="PCAF histone acetylase complex"/>
</dbReference>
<dbReference type="CORUM" id="Q9Y6J9"/>
<dbReference type="FunCoup" id="Q9Y6J9">
    <property type="interactions" value="2296"/>
</dbReference>
<dbReference type="IntAct" id="Q9Y6J9">
    <property type="interactions" value="90"/>
</dbReference>
<dbReference type="MINT" id="Q9Y6J9"/>
<dbReference type="STRING" id="9606.ENSP00000294168"/>
<dbReference type="GlyGen" id="Q9Y6J9">
    <property type="glycosylation" value="1 site"/>
</dbReference>
<dbReference type="iPTMnet" id="Q9Y6J9"/>
<dbReference type="PhosphoSitePlus" id="Q9Y6J9"/>
<dbReference type="BioMuta" id="TAF6L"/>
<dbReference type="DMDM" id="46577572"/>
<dbReference type="jPOST" id="Q9Y6J9"/>
<dbReference type="MassIVE" id="Q9Y6J9"/>
<dbReference type="PaxDb" id="9606-ENSP00000294168"/>
<dbReference type="PeptideAtlas" id="Q9Y6J9"/>
<dbReference type="ProteomicsDB" id="86707"/>
<dbReference type="Pumba" id="Q9Y6J9"/>
<dbReference type="Antibodypedia" id="14977">
    <property type="antibodies" value="231 antibodies from 27 providers"/>
</dbReference>
<dbReference type="DNASU" id="10629"/>
<dbReference type="Ensembl" id="ENST00000294168.8">
    <property type="protein sequence ID" value="ENSP00000294168.3"/>
    <property type="gene ID" value="ENSG00000162227.8"/>
</dbReference>
<dbReference type="GeneID" id="10629"/>
<dbReference type="KEGG" id="hsa:10629"/>
<dbReference type="MANE-Select" id="ENST00000294168.8">
    <property type="protein sequence ID" value="ENSP00000294168.3"/>
    <property type="RefSeq nucleotide sequence ID" value="NM_006473.4"/>
    <property type="RefSeq protein sequence ID" value="NP_006464.1"/>
</dbReference>
<dbReference type="UCSC" id="uc001nvc.4">
    <property type="organism name" value="human"/>
</dbReference>
<dbReference type="AGR" id="HGNC:17305"/>
<dbReference type="CTD" id="10629"/>
<dbReference type="DisGeNET" id="10629"/>
<dbReference type="GeneCards" id="TAF6L"/>
<dbReference type="HGNC" id="HGNC:17305">
    <property type="gene designation" value="TAF6L"/>
</dbReference>
<dbReference type="HPA" id="ENSG00000162227">
    <property type="expression patterns" value="Low tissue specificity"/>
</dbReference>
<dbReference type="MIM" id="602946">
    <property type="type" value="gene"/>
</dbReference>
<dbReference type="neXtProt" id="NX_Q9Y6J9"/>
<dbReference type="OpenTargets" id="ENSG00000162227"/>
<dbReference type="PharmGKB" id="PA38224"/>
<dbReference type="VEuPathDB" id="HostDB:ENSG00000162227"/>
<dbReference type="eggNOG" id="KOG2549">
    <property type="taxonomic scope" value="Eukaryota"/>
</dbReference>
<dbReference type="GeneTree" id="ENSGT00640000091486"/>
<dbReference type="HOGENOM" id="CLU_022764_0_0_1"/>
<dbReference type="InParanoid" id="Q9Y6J9"/>
<dbReference type="OMA" id="QKCRFSP"/>
<dbReference type="OrthoDB" id="6621890at2759"/>
<dbReference type="PAN-GO" id="Q9Y6J9">
    <property type="GO annotations" value="2 GO annotations based on evolutionary models"/>
</dbReference>
<dbReference type="PhylomeDB" id="Q9Y6J9"/>
<dbReference type="TreeFam" id="TF328731"/>
<dbReference type="PathwayCommons" id="Q9Y6J9"/>
<dbReference type="Reactome" id="R-HSA-3214847">
    <property type="pathway name" value="HATs acetylate histones"/>
</dbReference>
<dbReference type="SignaLink" id="Q9Y6J9"/>
<dbReference type="SIGNOR" id="Q9Y6J9"/>
<dbReference type="BioGRID-ORCS" id="10629">
    <property type="hits" value="264 hits in 1166 CRISPR screens"/>
</dbReference>
<dbReference type="ChiTaRS" id="TAF6L">
    <property type="organism name" value="human"/>
</dbReference>
<dbReference type="GeneWiki" id="TAF6L"/>
<dbReference type="GenomeRNAi" id="10629"/>
<dbReference type="Pharos" id="Q9Y6J9">
    <property type="development level" value="Tdark"/>
</dbReference>
<dbReference type="PRO" id="PR:Q9Y6J9"/>
<dbReference type="Proteomes" id="UP000005640">
    <property type="component" value="Chromosome 11"/>
</dbReference>
<dbReference type="RNAct" id="Q9Y6J9">
    <property type="molecule type" value="protein"/>
</dbReference>
<dbReference type="Bgee" id="ENSG00000162227">
    <property type="expression patterns" value="Expressed in metanephros cortex and 107 other cell types or tissues"/>
</dbReference>
<dbReference type="ExpressionAtlas" id="Q9Y6J9">
    <property type="expression patterns" value="baseline and differential"/>
</dbReference>
<dbReference type="GO" id="GO:0070062">
    <property type="term" value="C:extracellular exosome"/>
    <property type="evidence" value="ECO:0007005"/>
    <property type="project" value="UniProtKB"/>
</dbReference>
<dbReference type="GO" id="GO:0000118">
    <property type="term" value="C:histone deacetylase complex"/>
    <property type="evidence" value="ECO:0000304"/>
    <property type="project" value="ProtInc"/>
</dbReference>
<dbReference type="GO" id="GO:0005654">
    <property type="term" value="C:nucleoplasm"/>
    <property type="evidence" value="ECO:0000314"/>
    <property type="project" value="HPA"/>
</dbReference>
<dbReference type="GO" id="GO:0005634">
    <property type="term" value="C:nucleus"/>
    <property type="evidence" value="ECO:0000314"/>
    <property type="project" value="UniProtKB"/>
</dbReference>
<dbReference type="GO" id="GO:0000124">
    <property type="term" value="C:SAGA complex"/>
    <property type="evidence" value="ECO:0000314"/>
    <property type="project" value="UniProtKB"/>
</dbReference>
<dbReference type="GO" id="GO:0046695">
    <property type="term" value="C:SLIK (SAGA-like) complex"/>
    <property type="evidence" value="ECO:0007669"/>
    <property type="project" value="InterPro"/>
</dbReference>
<dbReference type="GO" id="GO:0005669">
    <property type="term" value="C:transcription factor TFIID complex"/>
    <property type="evidence" value="ECO:0007669"/>
    <property type="project" value="InterPro"/>
</dbReference>
<dbReference type="GO" id="GO:0003677">
    <property type="term" value="F:DNA binding"/>
    <property type="evidence" value="ECO:0000304"/>
    <property type="project" value="ProtInc"/>
</dbReference>
<dbReference type="GO" id="GO:0046982">
    <property type="term" value="F:protein heterodimerization activity"/>
    <property type="evidence" value="ECO:0007669"/>
    <property type="project" value="InterPro"/>
</dbReference>
<dbReference type="GO" id="GO:0016251">
    <property type="term" value="F:RNA polymerase II general transcription initiation factor activity"/>
    <property type="evidence" value="ECO:0007669"/>
    <property type="project" value="InterPro"/>
</dbReference>
<dbReference type="GO" id="GO:0003713">
    <property type="term" value="F:transcription coactivator activity"/>
    <property type="evidence" value="ECO:0000314"/>
    <property type="project" value="UniProtKB"/>
</dbReference>
<dbReference type="GO" id="GO:0006338">
    <property type="term" value="P:chromatin remodeling"/>
    <property type="evidence" value="ECO:0000304"/>
    <property type="project" value="ProtInc"/>
</dbReference>
<dbReference type="GO" id="GO:0045893">
    <property type="term" value="P:positive regulation of DNA-templated transcription"/>
    <property type="evidence" value="ECO:0000303"/>
    <property type="project" value="ComplexPortal"/>
</dbReference>
<dbReference type="GO" id="GO:0006282">
    <property type="term" value="P:regulation of DNA repair"/>
    <property type="evidence" value="ECO:0000303"/>
    <property type="project" value="ComplexPortal"/>
</dbReference>
<dbReference type="GO" id="GO:0006355">
    <property type="term" value="P:regulation of DNA-templated transcription"/>
    <property type="evidence" value="ECO:0000250"/>
    <property type="project" value="UniProtKB"/>
</dbReference>
<dbReference type="GO" id="GO:0043484">
    <property type="term" value="P:regulation of RNA splicing"/>
    <property type="evidence" value="ECO:0000303"/>
    <property type="project" value="ComplexPortal"/>
</dbReference>
<dbReference type="GO" id="GO:1904672">
    <property type="term" value="P:regulation of somatic stem cell population maintenance"/>
    <property type="evidence" value="ECO:0000250"/>
    <property type="project" value="UniProtKB"/>
</dbReference>
<dbReference type="GO" id="GO:0006357">
    <property type="term" value="P:regulation of transcription by RNA polymerase II"/>
    <property type="evidence" value="ECO:0000304"/>
    <property type="project" value="ProtInc"/>
</dbReference>
<dbReference type="GO" id="GO:0051123">
    <property type="term" value="P:RNA polymerase II preinitiation complex assembly"/>
    <property type="evidence" value="ECO:0000318"/>
    <property type="project" value="GO_Central"/>
</dbReference>
<dbReference type="CDD" id="cd22932">
    <property type="entry name" value="HFD_TAF6L"/>
    <property type="match status" value="1"/>
</dbReference>
<dbReference type="CDD" id="cd08050">
    <property type="entry name" value="TAF6C"/>
    <property type="match status" value="1"/>
</dbReference>
<dbReference type="FunFam" id="1.10.20.10:FF:000040">
    <property type="entry name" value="TAF6-like RNA polymerase II p300/CBP-associated factor-associated factor 65 kDa subunit 6L"/>
    <property type="match status" value="1"/>
</dbReference>
<dbReference type="FunFam" id="1.25.40.770:FF:000002">
    <property type="entry name" value="TAF6-like RNA polymerase II p300/CBP-associated factor-associated factor 65 kDa subunit 6L"/>
    <property type="match status" value="1"/>
</dbReference>
<dbReference type="Gene3D" id="1.10.20.10">
    <property type="entry name" value="Histone, subunit A"/>
    <property type="match status" value="1"/>
</dbReference>
<dbReference type="Gene3D" id="1.25.40.770">
    <property type="entry name" value="TAF6, C-terminal HEAT repeat domain"/>
    <property type="match status" value="1"/>
</dbReference>
<dbReference type="InterPro" id="IPR009072">
    <property type="entry name" value="Histone-fold"/>
</dbReference>
<dbReference type="InterPro" id="IPR037796">
    <property type="entry name" value="TAF6"/>
</dbReference>
<dbReference type="InterPro" id="IPR011442">
    <property type="entry name" value="TAF6_C"/>
</dbReference>
<dbReference type="InterPro" id="IPR046344">
    <property type="entry name" value="TAF6_C_sf"/>
</dbReference>
<dbReference type="InterPro" id="IPR004823">
    <property type="entry name" value="TAF_TATA-bd_Histone-like_dom"/>
</dbReference>
<dbReference type="PANTHER" id="PTHR10221:SF22">
    <property type="entry name" value="TAF6-LIKE RNA POLYMERASE II P300_CBP-ASSOCIATED FACTOR-ASSOCIATED FACTOR 65 KDA SUBUNIT 6L"/>
    <property type="match status" value="1"/>
</dbReference>
<dbReference type="PANTHER" id="PTHR10221">
    <property type="entry name" value="TRANSCRIPTION INITIATION FACTOR TFIID SUBUNIT 6"/>
    <property type="match status" value="1"/>
</dbReference>
<dbReference type="Pfam" id="PF02969">
    <property type="entry name" value="TAF"/>
    <property type="match status" value="1"/>
</dbReference>
<dbReference type="Pfam" id="PF07571">
    <property type="entry name" value="TAF6_C"/>
    <property type="match status" value="1"/>
</dbReference>
<dbReference type="SMART" id="SM00803">
    <property type="entry name" value="TAF"/>
    <property type="match status" value="1"/>
</dbReference>
<dbReference type="SUPFAM" id="SSF47113">
    <property type="entry name" value="Histone-fold"/>
    <property type="match status" value="1"/>
</dbReference>
<protein>
    <recommendedName>
        <fullName>TAF6-like RNA polymerase II p300/CBP-associated factor-associated factor 65 kDa subunit 6L</fullName>
        <shortName evidence="6">TAF6L</shortName>
    </recommendedName>
    <alternativeName>
        <fullName>PCAF-associated factor 65-alpha</fullName>
        <shortName>PAF65-alpha</shortName>
    </alternativeName>
</protein>
<evidence type="ECO:0000250" key="1">
    <source>
        <dbReference type="UniProtKB" id="Q8R2K4"/>
    </source>
</evidence>
<evidence type="ECO:0000256" key="2">
    <source>
        <dbReference type="SAM" id="MobiDB-lite"/>
    </source>
</evidence>
<evidence type="ECO:0000269" key="3">
    <source>
    </source>
</evidence>
<evidence type="ECO:0000269" key="4">
    <source>
    </source>
</evidence>
<evidence type="ECO:0000269" key="5">
    <source>
    </source>
</evidence>
<evidence type="ECO:0000305" key="6"/>
<evidence type="ECO:0000305" key="7">
    <source>
    </source>
</evidence>
<evidence type="ECO:0000312" key="8">
    <source>
        <dbReference type="HGNC" id="HGNC:17305"/>
    </source>
</evidence>
<evidence type="ECO:0007744" key="9">
    <source>
    </source>
</evidence>
<evidence type="ECO:0007744" key="10">
    <source>
    </source>
</evidence>
<evidence type="ECO:0007829" key="11">
    <source>
        <dbReference type="PDB" id="7KTR"/>
    </source>
</evidence>
<sequence>MSEREERRFVEIPRESVRLMAESTGLELSDEVAALLAEDVCYRLREATQNSSQFMKHTKRRKLTVEDFNRALRWSSVEAVCGYGSQEALPMRPAREGELYFPEDREVNLVELALATNIPKGCAETAVRVHVSYLDGKGNLAPQGSVPSAVSSLTDDLLKYYHQVTRAVLGDDPQLMKVALQDLQTNSKIGALLPYFVYVVSGVKSVSHDLEQLHRLLQVARSLFRNPHLCLGPYVRCLVGSVLYCVLEPLAASINPLNDHWTLRDGAALLLSHIFWTHGDLVSGLYQHILLSLQKILADPVRPLCCHYGAVVGLHALGWKAVERVLYPHLSTYWTNLQAVLDDYSVSNAQVKADGHKVYGAILVAVERLLKMKAQAAEPNRGGPGGRGCRRLDDLPWDSLLFQESSSGGGAEPSFGSGLPLPPGGAGPEDPSLSVTLADIYRELYAFFGDSLATRFGTGQPAPTAPRPPGDKKEPAAAPDSVRKMPQLTASAIVSPHGDESPRGSGGGGPASASGPAASESRPLPRVHRARGAPRQQGPGTGTRDVFQKSRFAPRGAPHFRFIIAGRQAGRRCRGRLFQTAFPAPYGPSPASRYVQKLPMIGRTSRPARRWALSDYSLYLPL</sequence>